<sequence length="99" mass="9818">MEYIYAALLLNSANKEVTEEAVKAVLVAGGIEANDARVKALVAALEGVDIAEAIAKAAIAPVAAAAPVAAAAAPAEVKKEEKKEDTTAAAAAGLGALFM</sequence>
<accession>P10623</accession>
<dbReference type="EMBL" id="J03187">
    <property type="protein sequence ID" value="AAA72191.1"/>
    <property type="molecule type" value="Genomic_DNA"/>
</dbReference>
<dbReference type="PIR" id="B28152">
    <property type="entry name" value="R6MXL2"/>
</dbReference>
<dbReference type="SMR" id="P10623"/>
<dbReference type="OMA" id="EYIYAAM"/>
<dbReference type="GO" id="GO:1990904">
    <property type="term" value="C:ribonucleoprotein complex"/>
    <property type="evidence" value="ECO:0007669"/>
    <property type="project" value="UniProtKB-KW"/>
</dbReference>
<dbReference type="GO" id="GO:0005840">
    <property type="term" value="C:ribosome"/>
    <property type="evidence" value="ECO:0007669"/>
    <property type="project" value="UniProtKB-KW"/>
</dbReference>
<dbReference type="GO" id="GO:0003735">
    <property type="term" value="F:structural constituent of ribosome"/>
    <property type="evidence" value="ECO:0007669"/>
    <property type="project" value="InterPro"/>
</dbReference>
<dbReference type="GO" id="GO:0006414">
    <property type="term" value="P:translational elongation"/>
    <property type="evidence" value="ECO:0007669"/>
    <property type="project" value="InterPro"/>
</dbReference>
<dbReference type="FunFam" id="1.10.10.1410:FF:000002">
    <property type="entry name" value="60S acidic ribosomal protein P2"/>
    <property type="match status" value="1"/>
</dbReference>
<dbReference type="Gene3D" id="1.10.10.1410">
    <property type="match status" value="1"/>
</dbReference>
<dbReference type="HAMAP" id="MF_01478">
    <property type="entry name" value="Ribosomal_L12_arch"/>
    <property type="match status" value="1"/>
</dbReference>
<dbReference type="InterPro" id="IPR038716">
    <property type="entry name" value="P1/P2_N_sf"/>
</dbReference>
<dbReference type="InterPro" id="IPR027534">
    <property type="entry name" value="Ribosomal_P1/P2"/>
</dbReference>
<dbReference type="InterPro" id="IPR022295">
    <property type="entry name" value="Ribosomal_P1_arc"/>
</dbReference>
<dbReference type="NCBIfam" id="TIGR03685">
    <property type="entry name" value="ribo_P1_arch"/>
    <property type="match status" value="1"/>
</dbReference>
<dbReference type="Pfam" id="PF00428">
    <property type="entry name" value="Ribosomal_60s"/>
    <property type="match status" value="1"/>
</dbReference>
<protein>
    <recommendedName>
        <fullName evidence="1">Large ribosomal subunit protein P1</fullName>
    </recommendedName>
    <alternativeName>
        <fullName evidence="1">50S ribosomal protein L12</fullName>
    </alternativeName>
</protein>
<feature type="chain" id="PRO_0000157633" description="Large ribosomal subunit protein P1">
    <location>
        <begin position="1"/>
        <end position="99"/>
    </location>
</feature>
<comment type="function">
    <text evidence="1">Forms part of the ribosomal stalk, playing a central role in the interaction of the ribosome with GTP-bound translation factors.</text>
</comment>
<comment type="subunit">
    <text evidence="2">Part of the 50S ribosomal subunit. Homodimer, it forms part of the ribosomal stalk which helps the ribosome interact with GTP-bound translation factors. Forms both a pentameric uL10/P0(P1)2(P1)2 and heptameric uL10/P0(P1)2(P1)2(P1)2 complex, where uL10/P0 forms an elongated spine to which the P1 dimers bind in a sequential fashion. The proportion of heptameric complexes increases during cell growth.</text>
</comment>
<comment type="mass spectrometry" mass="95405.27" error="23.6" method="Electrospray" evidence="2">
    <text>Isolated L10(L12)6.</text>
</comment>
<comment type="mass spectrometry" mass="75342.7" error="20.7" method="Electrospray" evidence="2">
    <text>Isolated L10(L12)4.</text>
</comment>
<comment type="mass spectrometry" mass="9819.7" error="2.4" method="Electrospray" evidence="2"/>
<comment type="similarity">
    <text evidence="1">Belongs to the eukaryotic ribosomal protein P1/P2 family.</text>
</comment>
<gene>
    <name evidence="1" type="primary">rpl12</name>
</gene>
<evidence type="ECO:0000255" key="1">
    <source>
        <dbReference type="HAMAP-Rule" id="MF_01478"/>
    </source>
</evidence>
<evidence type="ECO:0000269" key="2">
    <source>
    </source>
</evidence>
<proteinExistence type="evidence at protein level"/>
<name>RL12_METVA</name>
<reference key="1">
    <citation type="journal article" date="1988" name="J. Biol. Chem.">
        <title>Primary structure of the archaebacterial Methanococcus vannielii ribosomal protein L12. Amino acid sequence determination, oligonucleotide hybridization, and sequencing of the gene.</title>
        <authorList>
            <person name="Strobel O."/>
            <person name="Koepke A.K.E."/>
            <person name="Kamp R.M."/>
            <person name="Boeck A."/>
            <person name="Wittmann-Liebold B."/>
        </authorList>
    </citation>
    <scope>NUCLEOTIDE SEQUENCE [GENOMIC DNA]</scope>
</reference>
<reference key="2">
    <citation type="journal article" date="2010" name="Mol. Cell. Proteomics">
        <title>Mass spectrometry defines the stoichiometry of ribosomal stalk complexes across the phylogenetic tree.</title>
        <authorList>
            <person name="Gordiyenko Y."/>
            <person name="Videler H."/>
            <person name="Zhou M."/>
            <person name="McKay A.R."/>
            <person name="Fucini P."/>
            <person name="Biegel E."/>
            <person name="Muller V."/>
            <person name="Robinson C.V."/>
        </authorList>
    </citation>
    <scope>SUBUNIT</scope>
    <scope>STOICHIOMETRY</scope>
    <scope>MASS SPECTROMETRY</scope>
</reference>
<keyword id="KW-0687">Ribonucleoprotein</keyword>
<keyword id="KW-0689">Ribosomal protein</keyword>
<organism>
    <name type="scientific">Methanococcus vannielii</name>
    <dbReference type="NCBI Taxonomy" id="2187"/>
    <lineage>
        <taxon>Archaea</taxon>
        <taxon>Methanobacteriati</taxon>
        <taxon>Methanobacteriota</taxon>
        <taxon>Methanomada group</taxon>
        <taxon>Methanococci</taxon>
        <taxon>Methanococcales</taxon>
        <taxon>Methanococcaceae</taxon>
        <taxon>Methanococcus</taxon>
    </lineage>
</organism>